<reference key="1">
    <citation type="journal article" date="2004" name="Nat. Genet.">
        <title>Evidence in the Legionella pneumophila genome for exploitation of host cell functions and high genome plasticity.</title>
        <authorList>
            <person name="Cazalet C."/>
            <person name="Rusniok C."/>
            <person name="Brueggemann H."/>
            <person name="Zidane N."/>
            <person name="Magnier A."/>
            <person name="Ma L."/>
            <person name="Tichit M."/>
            <person name="Jarraud S."/>
            <person name="Bouchier C."/>
            <person name="Vandenesch F."/>
            <person name="Kunst F."/>
            <person name="Etienne J."/>
            <person name="Glaser P."/>
            <person name="Buchrieser C."/>
        </authorList>
    </citation>
    <scope>NUCLEOTIDE SEQUENCE [LARGE SCALE GENOMIC DNA]</scope>
    <source>
        <strain>Paris</strain>
    </source>
</reference>
<feature type="chain" id="PRO_0000161483" description="tRNA uridine(34) hydroxylase">
    <location>
        <begin position="1"/>
        <end position="254"/>
    </location>
</feature>
<feature type="domain" description="Rhodanese" evidence="1">
    <location>
        <begin position="123"/>
        <end position="217"/>
    </location>
</feature>
<feature type="active site" description="Cysteine persulfide intermediate" evidence="1">
    <location>
        <position position="177"/>
    </location>
</feature>
<organism>
    <name type="scientific">Legionella pneumophila (strain Paris)</name>
    <dbReference type="NCBI Taxonomy" id="297246"/>
    <lineage>
        <taxon>Bacteria</taxon>
        <taxon>Pseudomonadati</taxon>
        <taxon>Pseudomonadota</taxon>
        <taxon>Gammaproteobacteria</taxon>
        <taxon>Legionellales</taxon>
        <taxon>Legionellaceae</taxon>
        <taxon>Legionella</taxon>
    </lineage>
</organism>
<name>TRHO_LEGPA</name>
<comment type="function">
    <text evidence="1">Catalyzes oxygen-dependent 5-hydroxyuridine (ho5U) modification at position 34 in tRNAs.</text>
</comment>
<comment type="catalytic activity">
    <reaction evidence="1">
        <text>uridine(34) in tRNA + AH2 + O2 = 5-hydroxyuridine(34) in tRNA + A + H2O</text>
        <dbReference type="Rhea" id="RHEA:64224"/>
        <dbReference type="Rhea" id="RHEA-COMP:11727"/>
        <dbReference type="Rhea" id="RHEA-COMP:13381"/>
        <dbReference type="ChEBI" id="CHEBI:13193"/>
        <dbReference type="ChEBI" id="CHEBI:15377"/>
        <dbReference type="ChEBI" id="CHEBI:15379"/>
        <dbReference type="ChEBI" id="CHEBI:17499"/>
        <dbReference type="ChEBI" id="CHEBI:65315"/>
        <dbReference type="ChEBI" id="CHEBI:136877"/>
    </reaction>
</comment>
<comment type="similarity">
    <text evidence="1">Belongs to the TrhO family.</text>
</comment>
<keyword id="KW-0560">Oxidoreductase</keyword>
<keyword id="KW-0819">tRNA processing</keyword>
<accession>Q5X149</accession>
<proteinExistence type="inferred from homology"/>
<protein>
    <recommendedName>
        <fullName evidence="1">tRNA uridine(34) hydroxylase</fullName>
        <ecNumber evidence="1">1.14.-.-</ecNumber>
    </recommendedName>
    <alternativeName>
        <fullName evidence="1">tRNA hydroxylation protein O</fullName>
    </alternativeName>
</protein>
<sequence length="254" mass="29948">MKDIIIASFYKFIPLNDFESLREPILTKMHEIGIKGTIILAHEGVNGGFAGNREQMNVFYDYLRSDSRFADLHFKETYDNKNPFDKAKVKLRKEIVTMGVQKVDPSYNTGTYLSPEEWHQFIQDPNVILLDTRNDYEYELGTFKNAINPDIENFREFPDYVQRNLIDKKDKKIAMFCTGGIRCEKTTAYMKEQGFQHVYQLHDGILNYLESIPESESLWEGKCFVFDDRVAVDQKLDRVYPQLPQDYKYEREQK</sequence>
<dbReference type="EC" id="1.14.-.-" evidence="1"/>
<dbReference type="EMBL" id="CR628336">
    <property type="protein sequence ID" value="CAH14050.1"/>
    <property type="molecule type" value="Genomic_DNA"/>
</dbReference>
<dbReference type="RefSeq" id="WP_015961845.1">
    <property type="nucleotide sequence ID" value="NC_006368.1"/>
</dbReference>
<dbReference type="SMR" id="Q5X149"/>
<dbReference type="KEGG" id="lpp:lpp2897"/>
<dbReference type="LegioList" id="lpp2897"/>
<dbReference type="HOGENOM" id="CLU_038878_0_1_6"/>
<dbReference type="GO" id="GO:0016705">
    <property type="term" value="F:oxidoreductase activity, acting on paired donors, with incorporation or reduction of molecular oxygen"/>
    <property type="evidence" value="ECO:0007669"/>
    <property type="project" value="UniProtKB-UniRule"/>
</dbReference>
<dbReference type="GO" id="GO:0006400">
    <property type="term" value="P:tRNA modification"/>
    <property type="evidence" value="ECO:0007669"/>
    <property type="project" value="UniProtKB-UniRule"/>
</dbReference>
<dbReference type="CDD" id="cd01518">
    <property type="entry name" value="RHOD_YceA"/>
    <property type="match status" value="1"/>
</dbReference>
<dbReference type="Gene3D" id="3.30.70.100">
    <property type="match status" value="1"/>
</dbReference>
<dbReference type="Gene3D" id="3.40.250.10">
    <property type="entry name" value="Rhodanese-like domain"/>
    <property type="match status" value="1"/>
</dbReference>
<dbReference type="HAMAP" id="MF_00469">
    <property type="entry name" value="TrhO"/>
    <property type="match status" value="1"/>
</dbReference>
<dbReference type="InterPro" id="IPR001763">
    <property type="entry name" value="Rhodanese-like_dom"/>
</dbReference>
<dbReference type="InterPro" id="IPR036873">
    <property type="entry name" value="Rhodanese-like_dom_sf"/>
</dbReference>
<dbReference type="InterPro" id="IPR020936">
    <property type="entry name" value="TrhO"/>
</dbReference>
<dbReference type="InterPro" id="IPR040503">
    <property type="entry name" value="TRHO_N"/>
</dbReference>
<dbReference type="NCBIfam" id="NF001135">
    <property type="entry name" value="PRK00142.1-3"/>
    <property type="match status" value="1"/>
</dbReference>
<dbReference type="NCBIfam" id="NF001136">
    <property type="entry name" value="PRK00142.1-4"/>
    <property type="match status" value="1"/>
</dbReference>
<dbReference type="PANTHER" id="PTHR43268:SF3">
    <property type="entry name" value="RHODANESE-LIKE DOMAIN-CONTAINING PROTEIN 7-RELATED"/>
    <property type="match status" value="1"/>
</dbReference>
<dbReference type="PANTHER" id="PTHR43268">
    <property type="entry name" value="THIOSULFATE SULFURTRANSFERASE/RHODANESE-LIKE DOMAIN-CONTAINING PROTEIN 2"/>
    <property type="match status" value="1"/>
</dbReference>
<dbReference type="Pfam" id="PF00581">
    <property type="entry name" value="Rhodanese"/>
    <property type="match status" value="1"/>
</dbReference>
<dbReference type="Pfam" id="PF17773">
    <property type="entry name" value="UPF0176_N"/>
    <property type="match status" value="1"/>
</dbReference>
<dbReference type="SMART" id="SM00450">
    <property type="entry name" value="RHOD"/>
    <property type="match status" value="1"/>
</dbReference>
<dbReference type="SUPFAM" id="SSF52821">
    <property type="entry name" value="Rhodanese/Cell cycle control phosphatase"/>
    <property type="match status" value="1"/>
</dbReference>
<dbReference type="PROSITE" id="PS50206">
    <property type="entry name" value="RHODANESE_3"/>
    <property type="match status" value="1"/>
</dbReference>
<gene>
    <name evidence="1" type="primary">trhO</name>
    <name type="ordered locus">lpp2897</name>
</gene>
<evidence type="ECO:0000255" key="1">
    <source>
        <dbReference type="HAMAP-Rule" id="MF_00469"/>
    </source>
</evidence>